<gene>
    <name evidence="1" type="primary">pcp</name>
    <name type="ordered locus">BCE33L2805</name>
</gene>
<accession>Q639M5</accession>
<reference key="1">
    <citation type="journal article" date="2006" name="J. Bacteriol.">
        <title>Pathogenomic sequence analysis of Bacillus cereus and Bacillus thuringiensis isolates closely related to Bacillus anthracis.</title>
        <authorList>
            <person name="Han C.S."/>
            <person name="Xie G."/>
            <person name="Challacombe J.F."/>
            <person name="Altherr M.R."/>
            <person name="Bhotika S.S."/>
            <person name="Bruce D."/>
            <person name="Campbell C.S."/>
            <person name="Campbell M.L."/>
            <person name="Chen J."/>
            <person name="Chertkov O."/>
            <person name="Cleland C."/>
            <person name="Dimitrijevic M."/>
            <person name="Doggett N.A."/>
            <person name="Fawcett J.J."/>
            <person name="Glavina T."/>
            <person name="Goodwin L.A."/>
            <person name="Hill K.K."/>
            <person name="Hitchcock P."/>
            <person name="Jackson P.J."/>
            <person name="Keim P."/>
            <person name="Kewalramani A.R."/>
            <person name="Longmire J."/>
            <person name="Lucas S."/>
            <person name="Malfatti S."/>
            <person name="McMurry K."/>
            <person name="Meincke L.J."/>
            <person name="Misra M."/>
            <person name="Moseman B.L."/>
            <person name="Mundt M."/>
            <person name="Munk A.C."/>
            <person name="Okinaka R.T."/>
            <person name="Parson-Quintana B."/>
            <person name="Reilly L.P."/>
            <person name="Richardson P."/>
            <person name="Robinson D.L."/>
            <person name="Rubin E."/>
            <person name="Saunders E."/>
            <person name="Tapia R."/>
            <person name="Tesmer J.G."/>
            <person name="Thayer N."/>
            <person name="Thompson L.S."/>
            <person name="Tice H."/>
            <person name="Ticknor L.O."/>
            <person name="Wills P.L."/>
            <person name="Brettin T.S."/>
            <person name="Gilna P."/>
        </authorList>
    </citation>
    <scope>NUCLEOTIDE SEQUENCE [LARGE SCALE GENOMIC DNA]</scope>
    <source>
        <strain>ZK / E33L</strain>
    </source>
</reference>
<evidence type="ECO:0000255" key="1">
    <source>
        <dbReference type="HAMAP-Rule" id="MF_00417"/>
    </source>
</evidence>
<keyword id="KW-0963">Cytoplasm</keyword>
<keyword id="KW-0378">Hydrolase</keyword>
<keyword id="KW-0645">Protease</keyword>
<keyword id="KW-0788">Thiol protease</keyword>
<protein>
    <recommendedName>
        <fullName evidence="1">Pyrrolidone-carboxylate peptidase</fullName>
        <ecNumber evidence="1">3.4.19.3</ecNumber>
    </recommendedName>
    <alternativeName>
        <fullName evidence="1">5-oxoprolyl-peptidase</fullName>
    </alternativeName>
    <alternativeName>
        <fullName evidence="1">Pyroglutamyl-peptidase I</fullName>
        <shortName evidence="1">PGP-I</shortName>
        <shortName evidence="1">Pyrase</shortName>
    </alternativeName>
</protein>
<comment type="function">
    <text evidence="1">Removes 5-oxoproline from various penultimate amino acid residues except L-proline.</text>
</comment>
<comment type="catalytic activity">
    <reaction evidence="1">
        <text>Release of an N-terminal pyroglutamyl group from a polypeptide, the second amino acid generally not being Pro.</text>
        <dbReference type="EC" id="3.4.19.3"/>
    </reaction>
</comment>
<comment type="subunit">
    <text evidence="1">Homotetramer.</text>
</comment>
<comment type="subcellular location">
    <subcellularLocation>
        <location evidence="1">Cytoplasm</location>
    </subcellularLocation>
</comment>
<comment type="similarity">
    <text evidence="1">Belongs to the peptidase C15 family.</text>
</comment>
<dbReference type="EC" id="3.4.19.3" evidence="1"/>
<dbReference type="EMBL" id="CP000001">
    <property type="protein sequence ID" value="AAU17456.1"/>
    <property type="molecule type" value="Genomic_DNA"/>
</dbReference>
<dbReference type="RefSeq" id="WP_000859751.1">
    <property type="nucleotide sequence ID" value="NC_006274.1"/>
</dbReference>
<dbReference type="SMR" id="Q639M5"/>
<dbReference type="MEROPS" id="C15.001"/>
<dbReference type="KEGG" id="bcz:BCE33L2805"/>
<dbReference type="PATRIC" id="fig|288681.22.peg.2653"/>
<dbReference type="Proteomes" id="UP000002612">
    <property type="component" value="Chromosome"/>
</dbReference>
<dbReference type="GO" id="GO:0005829">
    <property type="term" value="C:cytosol"/>
    <property type="evidence" value="ECO:0007669"/>
    <property type="project" value="InterPro"/>
</dbReference>
<dbReference type="GO" id="GO:0016920">
    <property type="term" value="F:pyroglutamyl-peptidase activity"/>
    <property type="evidence" value="ECO:0007669"/>
    <property type="project" value="UniProtKB-UniRule"/>
</dbReference>
<dbReference type="GO" id="GO:0006508">
    <property type="term" value="P:proteolysis"/>
    <property type="evidence" value="ECO:0007669"/>
    <property type="project" value="UniProtKB-KW"/>
</dbReference>
<dbReference type="CDD" id="cd00501">
    <property type="entry name" value="Peptidase_C15"/>
    <property type="match status" value="1"/>
</dbReference>
<dbReference type="FunFam" id="3.40.630.20:FF:000001">
    <property type="entry name" value="Pyrrolidone-carboxylate peptidase"/>
    <property type="match status" value="1"/>
</dbReference>
<dbReference type="Gene3D" id="3.40.630.20">
    <property type="entry name" value="Peptidase C15, pyroglutamyl peptidase I-like"/>
    <property type="match status" value="1"/>
</dbReference>
<dbReference type="HAMAP" id="MF_00417">
    <property type="entry name" value="Pyrrolid_peptidase"/>
    <property type="match status" value="1"/>
</dbReference>
<dbReference type="InterPro" id="IPR000816">
    <property type="entry name" value="Peptidase_C15"/>
</dbReference>
<dbReference type="InterPro" id="IPR016125">
    <property type="entry name" value="Peptidase_C15-like"/>
</dbReference>
<dbReference type="InterPro" id="IPR036440">
    <property type="entry name" value="Peptidase_C15-like_sf"/>
</dbReference>
<dbReference type="InterPro" id="IPR029762">
    <property type="entry name" value="PGP-I_bact-type"/>
</dbReference>
<dbReference type="InterPro" id="IPR033694">
    <property type="entry name" value="PGPEP1_Cys_AS"/>
</dbReference>
<dbReference type="InterPro" id="IPR033693">
    <property type="entry name" value="PGPEP1_Glu_AS"/>
</dbReference>
<dbReference type="NCBIfam" id="NF009676">
    <property type="entry name" value="PRK13197.1"/>
    <property type="match status" value="1"/>
</dbReference>
<dbReference type="NCBIfam" id="TIGR00504">
    <property type="entry name" value="pyro_pdase"/>
    <property type="match status" value="1"/>
</dbReference>
<dbReference type="PANTHER" id="PTHR23402">
    <property type="entry name" value="PROTEASE FAMILY C15 PYROGLUTAMYL-PEPTIDASE I-RELATED"/>
    <property type="match status" value="1"/>
</dbReference>
<dbReference type="PANTHER" id="PTHR23402:SF1">
    <property type="entry name" value="PYROGLUTAMYL-PEPTIDASE I"/>
    <property type="match status" value="1"/>
</dbReference>
<dbReference type="Pfam" id="PF01470">
    <property type="entry name" value="Peptidase_C15"/>
    <property type="match status" value="1"/>
</dbReference>
<dbReference type="PIRSF" id="PIRSF015592">
    <property type="entry name" value="Prld-crbxl_pptds"/>
    <property type="match status" value="1"/>
</dbReference>
<dbReference type="PRINTS" id="PR00706">
    <property type="entry name" value="PYROGLUPTASE"/>
</dbReference>
<dbReference type="SUPFAM" id="SSF53182">
    <property type="entry name" value="Pyrrolidone carboxyl peptidase (pyroglutamate aminopeptidase)"/>
    <property type="match status" value="1"/>
</dbReference>
<dbReference type="PROSITE" id="PS01334">
    <property type="entry name" value="PYRASE_CYS"/>
    <property type="match status" value="1"/>
</dbReference>
<dbReference type="PROSITE" id="PS01333">
    <property type="entry name" value="PYRASE_GLU"/>
    <property type="match status" value="1"/>
</dbReference>
<feature type="chain" id="PRO_0000184710" description="Pyrrolidone-carboxylate peptidase">
    <location>
        <begin position="1"/>
        <end position="215"/>
    </location>
</feature>
<feature type="active site" evidence="1">
    <location>
        <position position="80"/>
    </location>
</feature>
<feature type="active site" evidence="1">
    <location>
        <position position="143"/>
    </location>
</feature>
<feature type="active site" evidence="1">
    <location>
        <position position="167"/>
    </location>
</feature>
<name>PCP_BACCZ</name>
<proteinExistence type="inferred from homology"/>
<sequence>MKTVLLTGFDPFGGESINPAWEVAKSLHEKTIREYKIISKQVPTVFHKSIQVLKEYIDELNPEIIICIGQAGGRPDITIERVAINIDDARIADNEGNQPVDVPVVEEGSAAYWSTLPMKAIVKRLQAEGIPASVSQTAGTFVCNHLFYGLMHELEKQDQKIKGGFVHIPFLPEQASKYPGQSSMSLSTIRKGIELAVEVTTTVEVDIVEVGGTTH</sequence>
<organism>
    <name type="scientific">Bacillus cereus (strain ZK / E33L)</name>
    <dbReference type="NCBI Taxonomy" id="288681"/>
    <lineage>
        <taxon>Bacteria</taxon>
        <taxon>Bacillati</taxon>
        <taxon>Bacillota</taxon>
        <taxon>Bacilli</taxon>
        <taxon>Bacillales</taxon>
        <taxon>Bacillaceae</taxon>
        <taxon>Bacillus</taxon>
        <taxon>Bacillus cereus group</taxon>
    </lineage>
</organism>